<sequence length="290" mass="33468">MKNTFSRLFGFGDKESEFELQDESHEEIAKKVYEEIQEIPIVNITPNRYQPRTVFDDARIEELALTIRTHGLIQPIVVRQYEDDKYEIIAGERRFRAATKLGWEKVPAIIKNLNDTETASVALIENLQREELTAIEEAVAYQKLIELHNLTQEALAQRLGKGQSTVANKLRLLKLPEEIKSALLEKSITERHARALIPLKNEELQLKVLQEIVEKQLNVKQTEERIAKLLEEVKPKRKAKQKAVSRDARIAMNTIRQSLQMVANSGLNVNSAEEEFDEYYQITIKIPKKK</sequence>
<name>NOC_BACMK</name>
<gene>
    <name evidence="1" type="primary">noc</name>
    <name type="ordered locus">BcerKBAB4_5274</name>
</gene>
<evidence type="ECO:0000255" key="1">
    <source>
        <dbReference type="HAMAP-Rule" id="MF_02015"/>
    </source>
</evidence>
<proteinExistence type="inferred from homology"/>
<dbReference type="EMBL" id="CP000903">
    <property type="protein sequence ID" value="ABY46417.1"/>
    <property type="molecule type" value="Genomic_DNA"/>
</dbReference>
<dbReference type="RefSeq" id="WP_002016471.1">
    <property type="nucleotide sequence ID" value="NC_010184.1"/>
</dbReference>
<dbReference type="SMR" id="A9VTL7"/>
<dbReference type="GeneID" id="66264962"/>
<dbReference type="KEGG" id="bwe:BcerKBAB4_5274"/>
<dbReference type="eggNOG" id="COG1475">
    <property type="taxonomic scope" value="Bacteria"/>
</dbReference>
<dbReference type="HOGENOM" id="CLU_023853_0_1_9"/>
<dbReference type="Proteomes" id="UP000002154">
    <property type="component" value="Chromosome"/>
</dbReference>
<dbReference type="GO" id="GO:0005694">
    <property type="term" value="C:chromosome"/>
    <property type="evidence" value="ECO:0007669"/>
    <property type="project" value="TreeGrafter"/>
</dbReference>
<dbReference type="GO" id="GO:0005737">
    <property type="term" value="C:cytoplasm"/>
    <property type="evidence" value="ECO:0007669"/>
    <property type="project" value="UniProtKB-UniRule"/>
</dbReference>
<dbReference type="GO" id="GO:0009295">
    <property type="term" value="C:nucleoid"/>
    <property type="evidence" value="ECO:0007669"/>
    <property type="project" value="UniProtKB-SubCell"/>
</dbReference>
<dbReference type="GO" id="GO:0003677">
    <property type="term" value="F:DNA binding"/>
    <property type="evidence" value="ECO:0007669"/>
    <property type="project" value="UniProtKB-UniRule"/>
</dbReference>
<dbReference type="GO" id="GO:0007059">
    <property type="term" value="P:chromosome segregation"/>
    <property type="evidence" value="ECO:0007669"/>
    <property type="project" value="TreeGrafter"/>
</dbReference>
<dbReference type="GO" id="GO:0000917">
    <property type="term" value="P:division septum assembly"/>
    <property type="evidence" value="ECO:0007669"/>
    <property type="project" value="UniProtKB-KW"/>
</dbReference>
<dbReference type="GO" id="GO:0045881">
    <property type="term" value="P:positive regulation of sporulation resulting in formation of a cellular spore"/>
    <property type="evidence" value="ECO:0007669"/>
    <property type="project" value="TreeGrafter"/>
</dbReference>
<dbReference type="CDD" id="cd16393">
    <property type="entry name" value="SPO0J_N"/>
    <property type="match status" value="1"/>
</dbReference>
<dbReference type="FunFam" id="1.10.10.2830:FF:000001">
    <property type="entry name" value="Chromosome partitioning protein ParB"/>
    <property type="match status" value="1"/>
</dbReference>
<dbReference type="FunFam" id="3.90.1530.30:FF:000001">
    <property type="entry name" value="Chromosome partitioning protein ParB"/>
    <property type="match status" value="1"/>
</dbReference>
<dbReference type="Gene3D" id="1.10.10.2830">
    <property type="match status" value="1"/>
</dbReference>
<dbReference type="Gene3D" id="3.90.1530.30">
    <property type="match status" value="1"/>
</dbReference>
<dbReference type="HAMAP" id="MF_02015">
    <property type="entry name" value="ParB_Noc"/>
    <property type="match status" value="1"/>
</dbReference>
<dbReference type="InterPro" id="IPR050336">
    <property type="entry name" value="Chromosome_partition/occlusion"/>
</dbReference>
<dbReference type="InterPro" id="IPR041468">
    <property type="entry name" value="HTH_ParB/Spo0J"/>
</dbReference>
<dbReference type="InterPro" id="IPR023705">
    <property type="entry name" value="Nucleoid_occlusion_protein"/>
</dbReference>
<dbReference type="InterPro" id="IPR004437">
    <property type="entry name" value="ParB/RepB/Spo0J"/>
</dbReference>
<dbReference type="InterPro" id="IPR003115">
    <property type="entry name" value="ParB/Sulfiredoxin_dom"/>
</dbReference>
<dbReference type="InterPro" id="IPR036086">
    <property type="entry name" value="ParB/Sulfiredoxin_sf"/>
</dbReference>
<dbReference type="NCBIfam" id="TIGR04285">
    <property type="entry name" value="nucleoid_noc"/>
    <property type="match status" value="1"/>
</dbReference>
<dbReference type="NCBIfam" id="TIGR00180">
    <property type="entry name" value="parB_part"/>
    <property type="match status" value="1"/>
</dbReference>
<dbReference type="PANTHER" id="PTHR33375">
    <property type="entry name" value="CHROMOSOME-PARTITIONING PROTEIN PARB-RELATED"/>
    <property type="match status" value="1"/>
</dbReference>
<dbReference type="PANTHER" id="PTHR33375:SF8">
    <property type="entry name" value="NUCLEOID OCCLUSION PROTEIN"/>
    <property type="match status" value="1"/>
</dbReference>
<dbReference type="Pfam" id="PF17762">
    <property type="entry name" value="HTH_ParB"/>
    <property type="match status" value="1"/>
</dbReference>
<dbReference type="Pfam" id="PF02195">
    <property type="entry name" value="ParBc"/>
    <property type="match status" value="1"/>
</dbReference>
<dbReference type="SMART" id="SM00470">
    <property type="entry name" value="ParB"/>
    <property type="match status" value="1"/>
</dbReference>
<dbReference type="SUPFAM" id="SSF110849">
    <property type="entry name" value="ParB/Sulfiredoxin"/>
    <property type="match status" value="1"/>
</dbReference>
<feature type="chain" id="PRO_0000346628" description="Nucleoid occlusion protein">
    <location>
        <begin position="1"/>
        <end position="290"/>
    </location>
</feature>
<feature type="DNA-binding region" description="H-T-H motif" evidence="1">
    <location>
        <begin position="153"/>
        <end position="172"/>
    </location>
</feature>
<reference key="1">
    <citation type="journal article" date="2008" name="Chem. Biol. Interact.">
        <title>Extending the Bacillus cereus group genomics to putative food-borne pathogens of different toxicity.</title>
        <authorList>
            <person name="Lapidus A."/>
            <person name="Goltsman E."/>
            <person name="Auger S."/>
            <person name="Galleron N."/>
            <person name="Segurens B."/>
            <person name="Dossat C."/>
            <person name="Land M.L."/>
            <person name="Broussolle V."/>
            <person name="Brillard J."/>
            <person name="Guinebretiere M.-H."/>
            <person name="Sanchis V."/>
            <person name="Nguen-the C."/>
            <person name="Lereclus D."/>
            <person name="Richardson P."/>
            <person name="Wincker P."/>
            <person name="Weissenbach J."/>
            <person name="Ehrlich S.D."/>
            <person name="Sorokin A."/>
        </authorList>
    </citation>
    <scope>NUCLEOTIDE SEQUENCE [LARGE SCALE GENOMIC DNA]</scope>
    <source>
        <strain>KBAB4</strain>
    </source>
</reference>
<keyword id="KW-0131">Cell cycle</keyword>
<keyword id="KW-0132">Cell division</keyword>
<keyword id="KW-0963">Cytoplasm</keyword>
<keyword id="KW-0238">DNA-binding</keyword>
<keyword id="KW-0717">Septation</keyword>
<accession>A9VTL7</accession>
<organism>
    <name type="scientific">Bacillus mycoides (strain KBAB4)</name>
    <name type="common">Bacillus weihenstephanensis</name>
    <dbReference type="NCBI Taxonomy" id="315730"/>
    <lineage>
        <taxon>Bacteria</taxon>
        <taxon>Bacillati</taxon>
        <taxon>Bacillota</taxon>
        <taxon>Bacilli</taxon>
        <taxon>Bacillales</taxon>
        <taxon>Bacillaceae</taxon>
        <taxon>Bacillus</taxon>
        <taxon>Bacillus cereus group</taxon>
    </lineage>
</organism>
<protein>
    <recommendedName>
        <fullName evidence="1">Nucleoid occlusion protein</fullName>
        <shortName evidence="1">Noc</shortName>
    </recommendedName>
</protein>
<comment type="function">
    <text evidence="1">Effects nucleoid occlusion by binding relatively nonspecifically to DNA and preventing the assembly of the division machinery in the vicinity of the nucleoid, especially under conditions that disturb the cell cycle. It helps to coordinate cell division and chromosome segregation by preventing the formation of the Z ring through the nucleoid, which would cause chromosome breakage.</text>
</comment>
<comment type="subcellular location">
    <subcellularLocation>
        <location evidence="1">Cytoplasm</location>
        <location evidence="1">Nucleoid</location>
    </subcellularLocation>
</comment>
<comment type="similarity">
    <text evidence="1">Belongs to the ParB family.</text>
</comment>